<sequence>MTDIINKLQAFADANPQSIAVRHTTDELTYQQLMDESSKLAHRLQGSKKPMILFGHMSPYMIVGMIGAIKAGCGYVPVDTSIPEDRIKMIINKVQPEFVFNTTDESFESLEGEVFTIEDIKTSQDPVIFDSQIKDNDTVYTIFTSGSTGEPKGVQIEYASLVQFTEWMLELNKSGNKQQWLNQAPFSFDLSVMAIYPCLASGGTLNLVDKNMINKPKLLNEMLTATPINIWVSTPSFMEMCLLLPTLNEEQYGSLNEFFFCGEILPHRAAKALVSRFPSATIYNTYGPTEATVAVTSIQITQEILDQYPTLPVGVERLGARLSTTDDGELVIEGQSVSLGYLKNDQKTAEVFNFDDGIRTYHTGDKAKFENGQWFIQGRIDFQIKLNGYRMELEEIETQLRQSEFVKEAIVVPVYKNDKVIHLIGAIVPTTEVTDNAEMTKNIKNDLKSRLPEYMIPRKFEWMEQLPLTSNGKIDRKKIAEVING</sequence>
<keyword id="KW-0067">ATP-binding</keyword>
<keyword id="KW-0963">Cytoplasm</keyword>
<keyword id="KW-0436">Ligase</keyword>
<keyword id="KW-0547">Nucleotide-binding</keyword>
<protein>
    <recommendedName>
        <fullName evidence="1">D-alanine--D-alanyl carrier protein ligase</fullName>
        <shortName evidence="1">DCL</shortName>
        <ecNumber evidence="1">6.2.1.54</ecNumber>
    </recommendedName>
    <alternativeName>
        <fullName evidence="1">D-alanine--poly(phosphoribitol) ligase subunit 1</fullName>
    </alternativeName>
    <alternativeName>
        <fullName evidence="1">D-alanine-activating enzyme</fullName>
        <shortName evidence="1">DAE</shortName>
    </alternativeName>
</protein>
<evidence type="ECO:0000255" key="1">
    <source>
        <dbReference type="HAMAP-Rule" id="MF_00593"/>
    </source>
</evidence>
<accession>P0C397</accession>
<accession>P68877</accession>
<accession>Q53661</accession>
<accession>Q9S673</accession>
<proteinExistence type="inferred from homology"/>
<name>DLTA_STAAU</name>
<feature type="chain" id="PRO_0000213152" description="D-alanine--D-alanyl carrier protein ligase">
    <location>
        <begin position="1"/>
        <end position="485"/>
    </location>
</feature>
<feature type="binding site" evidence="1">
    <location>
        <begin position="144"/>
        <end position="145"/>
    </location>
    <ligand>
        <name>ATP</name>
        <dbReference type="ChEBI" id="CHEBI:30616"/>
    </ligand>
</feature>
<feature type="binding site" evidence="1">
    <location>
        <position position="189"/>
    </location>
    <ligand>
        <name>D-alanine</name>
        <dbReference type="ChEBI" id="CHEBI:57416"/>
    </ligand>
</feature>
<feature type="binding site" evidence="1">
    <location>
        <begin position="284"/>
        <end position="289"/>
    </location>
    <ligand>
        <name>ATP</name>
        <dbReference type="ChEBI" id="CHEBI:30616"/>
    </ligand>
</feature>
<feature type="binding site" evidence="1">
    <location>
        <position position="293"/>
    </location>
    <ligand>
        <name>D-alanine</name>
        <dbReference type="ChEBI" id="CHEBI:57416"/>
    </ligand>
</feature>
<feature type="binding site" evidence="1">
    <location>
        <position position="365"/>
    </location>
    <ligand>
        <name>ATP</name>
        <dbReference type="ChEBI" id="CHEBI:30616"/>
    </ligand>
</feature>
<feature type="binding site" evidence="1">
    <location>
        <position position="473"/>
    </location>
    <ligand>
        <name>ATP</name>
        <dbReference type="ChEBI" id="CHEBI:30616"/>
    </ligand>
</feature>
<feature type="binding site" evidence="1">
    <location>
        <position position="473"/>
    </location>
    <ligand>
        <name>D-alanine</name>
        <dbReference type="ChEBI" id="CHEBI:57416"/>
    </ligand>
</feature>
<dbReference type="EC" id="6.2.1.54" evidence="1"/>
<dbReference type="EMBL" id="D86240">
    <property type="protein sequence ID" value="BAA13059.2"/>
    <property type="molecule type" value="Genomic_DNA"/>
</dbReference>
<dbReference type="RefSeq" id="WP_000129659.1">
    <property type="nucleotide sequence ID" value="NZ_WYDB01000003.1"/>
</dbReference>
<dbReference type="SMR" id="P0C397"/>
<dbReference type="OMA" id="VMDLYPC"/>
<dbReference type="UniPathway" id="UPA00556"/>
<dbReference type="GO" id="GO:0005737">
    <property type="term" value="C:cytoplasm"/>
    <property type="evidence" value="ECO:0007669"/>
    <property type="project" value="UniProtKB-SubCell"/>
</dbReference>
<dbReference type="GO" id="GO:0005524">
    <property type="term" value="F:ATP binding"/>
    <property type="evidence" value="ECO:0007669"/>
    <property type="project" value="UniProtKB-KW"/>
</dbReference>
<dbReference type="GO" id="GO:0047473">
    <property type="term" value="F:D-alanine [D-alanyl carrier protein] ligase activity"/>
    <property type="evidence" value="ECO:0007669"/>
    <property type="project" value="UniProtKB-UniRule"/>
</dbReference>
<dbReference type="GO" id="GO:0070395">
    <property type="term" value="P:lipoteichoic acid biosynthetic process"/>
    <property type="evidence" value="ECO:0007669"/>
    <property type="project" value="UniProtKB-UniRule"/>
</dbReference>
<dbReference type="CDD" id="cd05945">
    <property type="entry name" value="DltA"/>
    <property type="match status" value="1"/>
</dbReference>
<dbReference type="FunFam" id="3.30.300.30:FF:000012">
    <property type="entry name" value="D-alanine--D-alanyl carrier protein ligase"/>
    <property type="match status" value="1"/>
</dbReference>
<dbReference type="Gene3D" id="3.30.300.30">
    <property type="match status" value="1"/>
</dbReference>
<dbReference type="Gene3D" id="3.40.50.12780">
    <property type="entry name" value="N-terminal domain of ligase-like"/>
    <property type="match status" value="1"/>
</dbReference>
<dbReference type="HAMAP" id="MF_00593">
    <property type="entry name" value="DltA"/>
    <property type="match status" value="1"/>
</dbReference>
<dbReference type="InterPro" id="IPR010071">
    <property type="entry name" value="AA_adenyl_dom"/>
</dbReference>
<dbReference type="InterPro" id="IPR025110">
    <property type="entry name" value="AMP-bd_C"/>
</dbReference>
<dbReference type="InterPro" id="IPR045851">
    <property type="entry name" value="AMP-bd_C_sf"/>
</dbReference>
<dbReference type="InterPro" id="IPR000873">
    <property type="entry name" value="AMP-dep_synth/lig_dom"/>
</dbReference>
<dbReference type="InterPro" id="IPR042099">
    <property type="entry name" value="ANL_N_sf"/>
</dbReference>
<dbReference type="InterPro" id="IPR010072">
    <property type="entry name" value="DltA"/>
</dbReference>
<dbReference type="InterPro" id="IPR044507">
    <property type="entry name" value="DltA-like"/>
</dbReference>
<dbReference type="NCBIfam" id="TIGR01733">
    <property type="entry name" value="AA-adenyl-dom"/>
    <property type="match status" value="1"/>
</dbReference>
<dbReference type="NCBIfam" id="TIGR01734">
    <property type="entry name" value="D-ala-DACP-lig"/>
    <property type="match status" value="1"/>
</dbReference>
<dbReference type="NCBIfam" id="NF003417">
    <property type="entry name" value="PRK04813.1"/>
    <property type="match status" value="1"/>
</dbReference>
<dbReference type="PANTHER" id="PTHR45398">
    <property type="match status" value="1"/>
</dbReference>
<dbReference type="PANTHER" id="PTHR45398:SF1">
    <property type="entry name" value="ENZYME, PUTATIVE (JCVI)-RELATED"/>
    <property type="match status" value="1"/>
</dbReference>
<dbReference type="Pfam" id="PF00501">
    <property type="entry name" value="AMP-binding"/>
    <property type="match status" value="1"/>
</dbReference>
<dbReference type="Pfam" id="PF13193">
    <property type="entry name" value="AMP-binding_C"/>
    <property type="match status" value="1"/>
</dbReference>
<dbReference type="SUPFAM" id="SSF56801">
    <property type="entry name" value="Acetyl-CoA synthetase-like"/>
    <property type="match status" value="1"/>
</dbReference>
<comment type="function">
    <text evidence="1">Catalyzes the first step in the D-alanylation of lipoteichoic acid (LTA), the activation of D-alanine and its transfer onto the D-alanyl carrier protein (Dcp) DltC. In an ATP-dependent two-step reaction, forms a high energy D-alanyl-AMP intermediate, followed by transfer of the D-alanyl residue as a thiol ester to the phosphopantheinyl prosthetic group of the Dcp. D-alanylation of LTA plays an important role in modulating the properties of the cell wall in Gram-positive bacteria, influencing the net charge of the cell wall.</text>
</comment>
<comment type="catalytic activity">
    <reaction evidence="1">
        <text>holo-[D-alanyl-carrier protein] + D-alanine + ATP = D-alanyl-[D-alanyl-carrier protein] + AMP + diphosphate</text>
        <dbReference type="Rhea" id="RHEA:55132"/>
        <dbReference type="Rhea" id="RHEA-COMP:14102"/>
        <dbReference type="Rhea" id="RHEA-COMP:14103"/>
        <dbReference type="ChEBI" id="CHEBI:30616"/>
        <dbReference type="ChEBI" id="CHEBI:33019"/>
        <dbReference type="ChEBI" id="CHEBI:57416"/>
        <dbReference type="ChEBI" id="CHEBI:64479"/>
        <dbReference type="ChEBI" id="CHEBI:138620"/>
        <dbReference type="ChEBI" id="CHEBI:456215"/>
        <dbReference type="EC" id="6.2.1.54"/>
    </reaction>
</comment>
<comment type="pathway">
    <text evidence="1">Cell wall biogenesis; lipoteichoic acid biosynthesis.</text>
</comment>
<comment type="subcellular location">
    <subcellularLocation>
        <location evidence="1">Cytoplasm</location>
    </subcellularLocation>
</comment>
<comment type="similarity">
    <text evidence="1">Belongs to the ATP-dependent AMP-binding enzyme family. DltA subfamily.</text>
</comment>
<reference key="1">
    <citation type="submission" date="1996-06" db="EMBL/GenBank/DDBJ databases">
        <authorList>
            <person name="Nakao A."/>
            <person name="Imai S."/>
            <person name="Takano T."/>
        </authorList>
    </citation>
    <scope>NUCLEOTIDE SEQUENCE [GENOMIC DNA]</scope>
    <source>
        <strain>KAN96</strain>
    </source>
</reference>
<organism>
    <name type="scientific">Staphylococcus aureus</name>
    <dbReference type="NCBI Taxonomy" id="1280"/>
    <lineage>
        <taxon>Bacteria</taxon>
        <taxon>Bacillati</taxon>
        <taxon>Bacillota</taxon>
        <taxon>Bacilli</taxon>
        <taxon>Bacillales</taxon>
        <taxon>Staphylococcaceae</taxon>
        <taxon>Staphylococcus</taxon>
    </lineage>
</organism>
<gene>
    <name evidence="1" type="primary">dltA</name>
</gene>